<feature type="chain" id="PRO_0000061724" description="Cytochrome b">
    <location>
        <begin position="1"/>
        <end position="398"/>
    </location>
</feature>
<feature type="transmembrane region" description="Helical" evidence="3">
    <location>
        <begin position="38"/>
        <end position="58"/>
    </location>
</feature>
<feature type="transmembrane region" description="Helical" evidence="3">
    <location>
        <begin position="82"/>
        <end position="104"/>
    </location>
</feature>
<feature type="transmembrane region" description="Helical" evidence="3">
    <location>
        <begin position="119"/>
        <end position="139"/>
    </location>
</feature>
<feature type="transmembrane region" description="Helical" evidence="3">
    <location>
        <begin position="185"/>
        <end position="205"/>
    </location>
</feature>
<feature type="transmembrane region" description="Helical" evidence="3">
    <location>
        <begin position="231"/>
        <end position="251"/>
    </location>
</feature>
<feature type="transmembrane region" description="Helical" evidence="3">
    <location>
        <begin position="295"/>
        <end position="315"/>
    </location>
</feature>
<feature type="transmembrane region" description="Helical" evidence="3">
    <location>
        <begin position="327"/>
        <end position="347"/>
    </location>
</feature>
<feature type="transmembrane region" description="Helical" evidence="3">
    <location>
        <begin position="354"/>
        <end position="373"/>
    </location>
</feature>
<feature type="binding site" description="axial binding residue" evidence="3">
    <location>
        <position position="88"/>
    </location>
    <ligand>
        <name>heme b</name>
        <dbReference type="ChEBI" id="CHEBI:60344"/>
        <label>b562</label>
    </ligand>
    <ligandPart>
        <name>Fe</name>
        <dbReference type="ChEBI" id="CHEBI:18248"/>
    </ligandPart>
</feature>
<feature type="binding site" description="axial binding residue" evidence="3">
    <location>
        <position position="102"/>
    </location>
    <ligand>
        <name>heme b</name>
        <dbReference type="ChEBI" id="CHEBI:60344"/>
        <label>b566</label>
    </ligand>
    <ligandPart>
        <name>Fe</name>
        <dbReference type="ChEBI" id="CHEBI:18248"/>
    </ligandPart>
</feature>
<feature type="binding site" description="axial binding residue" evidence="3">
    <location>
        <position position="189"/>
    </location>
    <ligand>
        <name>heme b</name>
        <dbReference type="ChEBI" id="CHEBI:60344"/>
        <label>b562</label>
    </ligand>
    <ligandPart>
        <name>Fe</name>
        <dbReference type="ChEBI" id="CHEBI:18248"/>
    </ligandPart>
</feature>
<feature type="binding site" description="axial binding residue" evidence="3">
    <location>
        <position position="203"/>
    </location>
    <ligand>
        <name>heme b</name>
        <dbReference type="ChEBI" id="CHEBI:60344"/>
        <label>b566</label>
    </ligand>
    <ligandPart>
        <name>Fe</name>
        <dbReference type="ChEBI" id="CHEBI:18248"/>
    </ligandPart>
</feature>
<feature type="binding site" evidence="2">
    <location>
        <position position="208"/>
    </location>
    <ligand>
        <name>a ubiquinone</name>
        <dbReference type="ChEBI" id="CHEBI:16389"/>
    </ligand>
</feature>
<name>CYB_WHEAT</name>
<evidence type="ECO:0000250" key="1"/>
<evidence type="ECO:0000250" key="2">
    <source>
        <dbReference type="UniProtKB" id="P00157"/>
    </source>
</evidence>
<evidence type="ECO:0000250" key="3">
    <source>
        <dbReference type="UniProtKB" id="P00163"/>
    </source>
</evidence>
<evidence type="ECO:0000255" key="4">
    <source>
        <dbReference type="PROSITE-ProRule" id="PRU00967"/>
    </source>
</evidence>
<evidence type="ECO:0000255" key="5">
    <source>
        <dbReference type="PROSITE-ProRule" id="PRU00968"/>
    </source>
</evidence>
<evidence type="ECO:0000269" key="6">
    <source>
    </source>
</evidence>
<evidence type="ECO:0000269" key="7">
    <source>
    </source>
</evidence>
<accession>P07747</accession>
<dbReference type="EMBL" id="X02352">
    <property type="protein sequence ID" value="CAA26207.1"/>
    <property type="status" value="ALT_SEQ"/>
    <property type="molecule type" value="Genomic_DNA"/>
</dbReference>
<dbReference type="PIR" id="A22931">
    <property type="entry name" value="A22931"/>
</dbReference>
<dbReference type="RefSeq" id="YP_398402.1">
    <property type="nucleotide sequence ID" value="NC_007579.1"/>
</dbReference>
<dbReference type="SMR" id="P07747"/>
<dbReference type="PaxDb" id="4565-EPlTAEP00000010083"/>
<dbReference type="eggNOG" id="KOG4663">
    <property type="taxonomic scope" value="Eukaryota"/>
</dbReference>
<dbReference type="Proteomes" id="UP000019116">
    <property type="component" value="Unplaced"/>
</dbReference>
<dbReference type="GO" id="GO:0005743">
    <property type="term" value="C:mitochondrial inner membrane"/>
    <property type="evidence" value="ECO:0007669"/>
    <property type="project" value="UniProtKB-SubCell"/>
</dbReference>
<dbReference type="GO" id="GO:0045275">
    <property type="term" value="C:respiratory chain complex III"/>
    <property type="evidence" value="ECO:0007669"/>
    <property type="project" value="InterPro"/>
</dbReference>
<dbReference type="GO" id="GO:0046872">
    <property type="term" value="F:metal ion binding"/>
    <property type="evidence" value="ECO:0007669"/>
    <property type="project" value="UniProtKB-KW"/>
</dbReference>
<dbReference type="GO" id="GO:0008121">
    <property type="term" value="F:ubiquinol-cytochrome-c reductase activity"/>
    <property type="evidence" value="ECO:0007669"/>
    <property type="project" value="InterPro"/>
</dbReference>
<dbReference type="GO" id="GO:0022904">
    <property type="term" value="P:respiratory electron transport chain"/>
    <property type="evidence" value="ECO:0007669"/>
    <property type="project" value="InterPro"/>
</dbReference>
<dbReference type="CDD" id="cd00290">
    <property type="entry name" value="cytochrome_b_C"/>
    <property type="match status" value="1"/>
</dbReference>
<dbReference type="CDD" id="cd00284">
    <property type="entry name" value="Cytochrome_b_N"/>
    <property type="match status" value="1"/>
</dbReference>
<dbReference type="FunFam" id="1.20.810.10:FF:000006">
    <property type="entry name" value="Cytochrome b"/>
    <property type="match status" value="1"/>
</dbReference>
<dbReference type="Gene3D" id="1.20.810.10">
    <property type="entry name" value="Cytochrome Bc1 Complex, Chain C"/>
    <property type="match status" value="1"/>
</dbReference>
<dbReference type="InterPro" id="IPR005798">
    <property type="entry name" value="Cyt_b/b6_C"/>
</dbReference>
<dbReference type="InterPro" id="IPR036150">
    <property type="entry name" value="Cyt_b/b6_C_sf"/>
</dbReference>
<dbReference type="InterPro" id="IPR005797">
    <property type="entry name" value="Cyt_b/b6_N"/>
</dbReference>
<dbReference type="InterPro" id="IPR027387">
    <property type="entry name" value="Cytb/b6-like_sf"/>
</dbReference>
<dbReference type="InterPro" id="IPR030689">
    <property type="entry name" value="Cytochrome_b"/>
</dbReference>
<dbReference type="InterPro" id="IPR048260">
    <property type="entry name" value="Cytochrome_b_C_euk/bac"/>
</dbReference>
<dbReference type="InterPro" id="IPR048259">
    <property type="entry name" value="Cytochrome_b_N_euk/bac"/>
</dbReference>
<dbReference type="InterPro" id="IPR016174">
    <property type="entry name" value="Di-haem_cyt_TM"/>
</dbReference>
<dbReference type="PANTHER" id="PTHR19271">
    <property type="entry name" value="CYTOCHROME B"/>
    <property type="match status" value="1"/>
</dbReference>
<dbReference type="PANTHER" id="PTHR19271:SF16">
    <property type="entry name" value="CYTOCHROME B"/>
    <property type="match status" value="1"/>
</dbReference>
<dbReference type="Pfam" id="PF00032">
    <property type="entry name" value="Cytochrom_B_C"/>
    <property type="match status" value="1"/>
</dbReference>
<dbReference type="Pfam" id="PF00033">
    <property type="entry name" value="Cytochrome_B"/>
    <property type="match status" value="1"/>
</dbReference>
<dbReference type="PIRSF" id="PIRSF038885">
    <property type="entry name" value="COB"/>
    <property type="match status" value="1"/>
</dbReference>
<dbReference type="SUPFAM" id="SSF81648">
    <property type="entry name" value="a domain/subunit of cytochrome bc1 complex (Ubiquinol-cytochrome c reductase)"/>
    <property type="match status" value="1"/>
</dbReference>
<dbReference type="SUPFAM" id="SSF81342">
    <property type="entry name" value="Transmembrane di-heme cytochromes"/>
    <property type="match status" value="1"/>
</dbReference>
<dbReference type="PROSITE" id="PS51003">
    <property type="entry name" value="CYTB_CTER"/>
    <property type="match status" value="1"/>
</dbReference>
<dbReference type="PROSITE" id="PS51002">
    <property type="entry name" value="CYTB_NTER"/>
    <property type="match status" value="1"/>
</dbReference>
<organism>
    <name type="scientific">Triticum aestivum</name>
    <name type="common">Wheat</name>
    <dbReference type="NCBI Taxonomy" id="4565"/>
    <lineage>
        <taxon>Eukaryota</taxon>
        <taxon>Viridiplantae</taxon>
        <taxon>Streptophyta</taxon>
        <taxon>Embryophyta</taxon>
        <taxon>Tracheophyta</taxon>
        <taxon>Spermatophyta</taxon>
        <taxon>Magnoliopsida</taxon>
        <taxon>Liliopsida</taxon>
        <taxon>Poales</taxon>
        <taxon>Poaceae</taxon>
        <taxon>BOP clade</taxon>
        <taxon>Pooideae</taxon>
        <taxon>Triticodae</taxon>
        <taxon>Triticeae</taxon>
        <taxon>Triticinae</taxon>
        <taxon>Triticum</taxon>
    </lineage>
</organism>
<protein>
    <recommendedName>
        <fullName>Cytochrome b</fullName>
    </recommendedName>
    <alternativeName>
        <fullName>Complex III subunit 3</fullName>
    </alternativeName>
    <alternativeName>
        <fullName>Complex III subunit III</fullName>
    </alternativeName>
    <alternativeName>
        <fullName>Cytochrome b-c1 complex subunit 3</fullName>
    </alternativeName>
    <alternativeName>
        <fullName>Ubiquinol-cytochrome-c reductase complex cytochrome b subunit</fullName>
    </alternativeName>
</protein>
<comment type="function">
    <text evidence="3">Component of the ubiquinol-cytochrome c reductase complex (complex III or cytochrome b-c1 complex) that is part of the mitochondrial respiratory chain. The b-c1 complex mediates electron transfer from ubiquinol to cytochrome c. Contributes to the generation of a proton gradient across the mitochondrial membrane that is then used for ATP synthesis.</text>
</comment>
<comment type="cofactor">
    <cofactor evidence="3">
        <name>heme b</name>
        <dbReference type="ChEBI" id="CHEBI:60344"/>
    </cofactor>
    <text evidence="3">Binds 2 heme b groups non-covalently.</text>
</comment>
<comment type="subunit">
    <text evidence="1">The main subunits of complex b-c1 are: cytochrome b, cytochrome c1 and the Rieske protein.</text>
</comment>
<comment type="subcellular location">
    <subcellularLocation>
        <location evidence="3">Mitochondrion inner membrane</location>
        <topology evidence="3">Multi-pass membrane protein</topology>
    </subcellularLocation>
</comment>
<comment type="RNA editing">
    <location>
        <position position="60" evidence="6 7"/>
    </location>
    <location>
        <position position="96" evidence="6 7"/>
    </location>
    <location>
        <position position="100" evidence="6 7"/>
    </location>
    <location>
        <position position="109" evidence="6 7"/>
    </location>
    <location>
        <position position="120" evidence="6 7"/>
    </location>
    <location>
        <position position="140" evidence="6 7"/>
    </location>
    <location>
        <position position="190" evidence="6 7"/>
    </location>
    <location>
        <position position="194" evidence="6 7"/>
    </location>
    <location>
        <position position="227" evidence="6 7"/>
    </location>
    <location>
        <position position="239" evidence="6 7"/>
    </location>
    <location>
        <position position="242" evidence="6 7"/>
    </location>
    <location>
        <position position="270" evidence="6 7"/>
    </location>
    <location>
        <position position="285" evidence="6 7"/>
    </location>
    <location>
        <position position="303" evidence="6 7"/>
    </location>
    <location>
        <position position="328" evidence="6 7"/>
    </location>
    <location>
        <position position="361" evidence="6 7"/>
    </location>
    <location>
        <position position="375" evidence="6 7"/>
    </location>
</comment>
<comment type="miscellaneous">
    <text evidence="1">Heme 1 (or BL or b562) is low-potential and absorbs at about 562 nm, and heme 2 (or BH or b566) is high-potential and absorbs at about 566 nm.</text>
</comment>
<comment type="similarity">
    <text evidence="4 5">Belongs to the cytochrome b family.</text>
</comment>
<comment type="caution">
    <text evidence="3">The protein contains only eight transmembrane helices, not nine as predicted by bioinformatics tools.</text>
</comment>
<keyword id="KW-0249">Electron transport</keyword>
<keyword id="KW-0349">Heme</keyword>
<keyword id="KW-0408">Iron</keyword>
<keyword id="KW-0472">Membrane</keyword>
<keyword id="KW-0479">Metal-binding</keyword>
<keyword id="KW-0496">Mitochondrion</keyword>
<keyword id="KW-0999">Mitochondrion inner membrane</keyword>
<keyword id="KW-1185">Reference proteome</keyword>
<keyword id="KW-0679">Respiratory chain</keyword>
<keyword id="KW-0691">RNA editing</keyword>
<keyword id="KW-0812">Transmembrane</keyword>
<keyword id="KW-1133">Transmembrane helix</keyword>
<keyword id="KW-0813">Transport</keyword>
<keyword id="KW-0830">Ubiquinone</keyword>
<sequence>MTIRNQRFSLLKQPIYSTLNQHLIDYPTPSNLSYWWGFGSLAGICLVIQIVTGVFLAMHYTPHVDLAFNSVEHIMRDVEGGWLLRYMHANGASMFFIVVYLHIFRGLYYASYSSPREFVWCLGVVIFLLMIVTAFIGYVLPWGQMSFWGATVITSLASAIPVVGDTIVTWLWGGFSVDNATLNRFFSLHYLLPFILVGASLLHLAALHQYGSNNPLGVHSEMDKIAFYPYFYVKDLVGWVAFAIFFSIWIFFAPNVLGHPDNYIPANPMSTPPHIVPEWYFLPIYAILRSIPDKAGGVAAIALVFISLLALPFFKEMYVRSSSFRPIYQGIFWLLLADCLLLGWIGCQPVEAPFVTIGQISSVFFFLFFAITPILGRVGRGIPKYYTDETHRTGSFWP</sequence>
<proteinExistence type="evidence at transcript level"/>
<reference key="1">
    <citation type="journal article" date="1985" name="Nucleic Acids Res.">
        <title>The wheat mitochondrial gene for apocytochrome b: absence of a prokaryotic ribosome binding site.</title>
        <authorList>
            <person name="Boer P.H."/>
            <person name="McIntosh J.E."/>
            <person name="Gray M.W."/>
            <person name="Bonen L."/>
        </authorList>
    </citation>
    <scope>NUCLEOTIDE SEQUENCE [GENOMIC DNA]</scope>
</reference>
<reference key="2">
    <citation type="journal article" date="1989" name="Nature">
        <title>RNA editing in wheat mitochondria results in the conservation of protein sequences.</title>
        <authorList>
            <person name="Gualberto J.M."/>
            <person name="Lamattina L."/>
            <person name="Bonnard G."/>
            <person name="Weil J.-H."/>
            <person name="Grienenberger J.-M."/>
        </authorList>
    </citation>
    <scope>RNA EDITING</scope>
</reference>
<reference key="3">
    <citation type="journal article" date="1993" name="Curr. Genet.">
        <title>RNA editing of apocytochrome b (cob) transcripts in mitochondria from two genera of plants.</title>
        <authorList>
            <person name="Zanlungo S."/>
            <person name="Begu D."/>
            <person name="Quinones V."/>
            <person name="Araya A."/>
            <person name="Jordana X."/>
        </authorList>
    </citation>
    <scope>RNA EDITING</scope>
</reference>
<geneLocation type="mitochondrion"/>
<gene>
    <name type="primary">MT-CYB</name>
    <name type="synonym">COB</name>
    <name type="synonym">CYTB</name>
    <name type="synonym">MTCYB</name>
</gene>